<evidence type="ECO:0000255" key="1">
    <source>
        <dbReference type="HAMAP-Rule" id="MF_01101"/>
    </source>
</evidence>
<accession>B7N5Q7</accession>
<feature type="chain" id="PRO_1000136989" description="UPF0208 membrane protein YfbV">
    <location>
        <begin position="1"/>
        <end position="151"/>
    </location>
</feature>
<feature type="transmembrane region" description="Helical" evidence="1">
    <location>
        <begin position="46"/>
        <end position="65"/>
    </location>
</feature>
<feature type="transmembrane region" description="Helical" evidence="1">
    <location>
        <begin position="69"/>
        <end position="91"/>
    </location>
</feature>
<name>YFBV_ECOLU</name>
<reference key="1">
    <citation type="journal article" date="2009" name="PLoS Genet.">
        <title>Organised genome dynamics in the Escherichia coli species results in highly diverse adaptive paths.</title>
        <authorList>
            <person name="Touchon M."/>
            <person name="Hoede C."/>
            <person name="Tenaillon O."/>
            <person name="Barbe V."/>
            <person name="Baeriswyl S."/>
            <person name="Bidet P."/>
            <person name="Bingen E."/>
            <person name="Bonacorsi S."/>
            <person name="Bouchier C."/>
            <person name="Bouvet O."/>
            <person name="Calteau A."/>
            <person name="Chiapello H."/>
            <person name="Clermont O."/>
            <person name="Cruveiller S."/>
            <person name="Danchin A."/>
            <person name="Diard M."/>
            <person name="Dossat C."/>
            <person name="Karoui M.E."/>
            <person name="Frapy E."/>
            <person name="Garry L."/>
            <person name="Ghigo J.M."/>
            <person name="Gilles A.M."/>
            <person name="Johnson J."/>
            <person name="Le Bouguenec C."/>
            <person name="Lescat M."/>
            <person name="Mangenot S."/>
            <person name="Martinez-Jehanne V."/>
            <person name="Matic I."/>
            <person name="Nassif X."/>
            <person name="Oztas S."/>
            <person name="Petit M.A."/>
            <person name="Pichon C."/>
            <person name="Rouy Z."/>
            <person name="Ruf C.S."/>
            <person name="Schneider D."/>
            <person name="Tourret J."/>
            <person name="Vacherie B."/>
            <person name="Vallenet D."/>
            <person name="Medigue C."/>
            <person name="Rocha E.P.C."/>
            <person name="Denamur E."/>
        </authorList>
    </citation>
    <scope>NUCLEOTIDE SEQUENCE [LARGE SCALE GENOMIC DNA]</scope>
    <source>
        <strain>UMN026 / ExPEC</strain>
    </source>
</reference>
<sequence length="151" mass="17213">MSTPDNRSVNFFSLFRRGQHYSKTWPLEKRLAPVFVENRVIKMTRYAIRFMPPIAVFTLCWQIALGGQLGPAVATALFALSLPMQGLWWLGKRSVTPLPPAILNWFYEVRGKLQESGQVLAPVEGKPDYQALADTLKRAFKQLDKTFLDDL</sequence>
<dbReference type="EMBL" id="CU928163">
    <property type="protein sequence ID" value="CAR13816.1"/>
    <property type="molecule type" value="Genomic_DNA"/>
</dbReference>
<dbReference type="RefSeq" id="WP_000106627.1">
    <property type="nucleotide sequence ID" value="NC_011751.1"/>
</dbReference>
<dbReference type="RefSeq" id="YP_002413344.1">
    <property type="nucleotide sequence ID" value="NC_011751.1"/>
</dbReference>
<dbReference type="STRING" id="585056.ECUMN_2634"/>
<dbReference type="GeneID" id="93774879"/>
<dbReference type="KEGG" id="eum:ECUMN_2634"/>
<dbReference type="PATRIC" id="fig|585056.7.peg.2816"/>
<dbReference type="HOGENOM" id="CLU_128746_0_0_6"/>
<dbReference type="Proteomes" id="UP000007097">
    <property type="component" value="Chromosome"/>
</dbReference>
<dbReference type="GO" id="GO:0005886">
    <property type="term" value="C:plasma membrane"/>
    <property type="evidence" value="ECO:0007669"/>
    <property type="project" value="UniProtKB-SubCell"/>
</dbReference>
<dbReference type="HAMAP" id="MF_01101">
    <property type="entry name" value="UPF0208"/>
    <property type="match status" value="1"/>
</dbReference>
<dbReference type="InterPro" id="IPR007334">
    <property type="entry name" value="UPF0208"/>
</dbReference>
<dbReference type="NCBIfam" id="NF002493">
    <property type="entry name" value="PRK01816.1"/>
    <property type="match status" value="1"/>
</dbReference>
<dbReference type="Pfam" id="PF04217">
    <property type="entry name" value="DUF412"/>
    <property type="match status" value="1"/>
</dbReference>
<protein>
    <recommendedName>
        <fullName evidence="1">UPF0208 membrane protein YfbV</fullName>
    </recommendedName>
</protein>
<proteinExistence type="inferred from homology"/>
<keyword id="KW-0997">Cell inner membrane</keyword>
<keyword id="KW-1003">Cell membrane</keyword>
<keyword id="KW-0472">Membrane</keyword>
<keyword id="KW-0812">Transmembrane</keyword>
<keyword id="KW-1133">Transmembrane helix</keyword>
<gene>
    <name evidence="1" type="primary">yfbV</name>
    <name type="ordered locus">ECUMN_2634</name>
</gene>
<organism>
    <name type="scientific">Escherichia coli O17:K52:H18 (strain UMN026 / ExPEC)</name>
    <dbReference type="NCBI Taxonomy" id="585056"/>
    <lineage>
        <taxon>Bacteria</taxon>
        <taxon>Pseudomonadati</taxon>
        <taxon>Pseudomonadota</taxon>
        <taxon>Gammaproteobacteria</taxon>
        <taxon>Enterobacterales</taxon>
        <taxon>Enterobacteriaceae</taxon>
        <taxon>Escherichia</taxon>
    </lineage>
</organism>
<comment type="subcellular location">
    <subcellularLocation>
        <location evidence="1">Cell inner membrane</location>
        <topology evidence="1">Multi-pass membrane protein</topology>
    </subcellularLocation>
</comment>
<comment type="similarity">
    <text evidence="1">Belongs to the UPF0208 family.</text>
</comment>